<comment type="function">
    <text evidence="1">Cell wall formation.</text>
</comment>
<comment type="catalytic activity">
    <reaction evidence="1">
        <text>UDP-N-acetyl-alpha-D-muramate + L-alanine + ATP = UDP-N-acetyl-alpha-D-muramoyl-L-alanine + ADP + phosphate + H(+)</text>
        <dbReference type="Rhea" id="RHEA:23372"/>
        <dbReference type="ChEBI" id="CHEBI:15378"/>
        <dbReference type="ChEBI" id="CHEBI:30616"/>
        <dbReference type="ChEBI" id="CHEBI:43474"/>
        <dbReference type="ChEBI" id="CHEBI:57972"/>
        <dbReference type="ChEBI" id="CHEBI:70757"/>
        <dbReference type="ChEBI" id="CHEBI:83898"/>
        <dbReference type="ChEBI" id="CHEBI:456216"/>
        <dbReference type="EC" id="6.3.2.8"/>
    </reaction>
</comment>
<comment type="pathway">
    <text evidence="1">Cell wall biogenesis; peptidoglycan biosynthesis.</text>
</comment>
<comment type="subcellular location">
    <subcellularLocation>
        <location evidence="1">Cytoplasm</location>
    </subcellularLocation>
</comment>
<comment type="similarity">
    <text evidence="1">Belongs to the MurCDEF family.</text>
</comment>
<gene>
    <name evidence="1" type="primary">murC</name>
    <name type="ordered locus">Caul_3663</name>
</gene>
<protein>
    <recommendedName>
        <fullName evidence="1">UDP-N-acetylmuramate--L-alanine ligase</fullName>
        <ecNumber evidence="1">6.3.2.8</ecNumber>
    </recommendedName>
    <alternativeName>
        <fullName evidence="1">UDP-N-acetylmuramoyl-L-alanine synthetase</fullName>
    </alternativeName>
</protein>
<keyword id="KW-0067">ATP-binding</keyword>
<keyword id="KW-0131">Cell cycle</keyword>
<keyword id="KW-0132">Cell division</keyword>
<keyword id="KW-0133">Cell shape</keyword>
<keyword id="KW-0961">Cell wall biogenesis/degradation</keyword>
<keyword id="KW-0963">Cytoplasm</keyword>
<keyword id="KW-0436">Ligase</keyword>
<keyword id="KW-0547">Nucleotide-binding</keyword>
<keyword id="KW-0573">Peptidoglycan synthesis</keyword>
<organism>
    <name type="scientific">Caulobacter sp. (strain K31)</name>
    <dbReference type="NCBI Taxonomy" id="366602"/>
    <lineage>
        <taxon>Bacteria</taxon>
        <taxon>Pseudomonadati</taxon>
        <taxon>Pseudomonadota</taxon>
        <taxon>Alphaproteobacteria</taxon>
        <taxon>Caulobacterales</taxon>
        <taxon>Caulobacteraceae</taxon>
        <taxon>Caulobacter</taxon>
    </lineage>
</organism>
<proteinExistence type="inferred from homology"/>
<feature type="chain" id="PRO_0000336821" description="UDP-N-acetylmuramate--L-alanine ligase">
    <location>
        <begin position="1"/>
        <end position="472"/>
    </location>
</feature>
<feature type="binding site" evidence="1">
    <location>
        <begin position="119"/>
        <end position="125"/>
    </location>
    <ligand>
        <name>ATP</name>
        <dbReference type="ChEBI" id="CHEBI:30616"/>
    </ligand>
</feature>
<sequence>MIQRRRPVPFELGPVHFIGIGGIGMSGIAEIMLRIGYTVQGSDAKASANTERLEKLGARIFIGHDAAHVEGASAIVYSTAVKADNPEMVAGRDKRLPLVRRAEMLAELMRLQFSVAVGGTHGKTTTTSMVAALLDAGALDPTVVNGGIINAYGTNAKVGEGDWIVVEADESDGSFLKLKSTVAIVTNIDAEHLDHWGTFDAVKKGFQDFIENIPFYGFAAVCTDHPEVQALTARIENRRLVTYGTNPQAEVRVSNIQMGPEGAQFDILVSPLSGDLVLYEGLKMPMAGHHNVLNATAAVAVARELGVDADAIRAGLAGFGGVKRRFTTTGVANGVRIVDDYGHHPVEIAAVLKAARAVSTGKVIAVVQPHRFTRLRDLMTEFSSCFNDADTVIVADVYTAGEAPIEGVDRDHLVEGLKKFGHRRALALESPAALPALIAAEAQSGDLVVLLGAGDITNWSYALPGQLEALAK</sequence>
<accession>B0T827</accession>
<name>MURC_CAUSK</name>
<evidence type="ECO:0000255" key="1">
    <source>
        <dbReference type="HAMAP-Rule" id="MF_00046"/>
    </source>
</evidence>
<reference key="1">
    <citation type="submission" date="2008-01" db="EMBL/GenBank/DDBJ databases">
        <title>Complete sequence of chromosome of Caulobacter sp. K31.</title>
        <authorList>
            <consortium name="US DOE Joint Genome Institute"/>
            <person name="Copeland A."/>
            <person name="Lucas S."/>
            <person name="Lapidus A."/>
            <person name="Barry K."/>
            <person name="Glavina del Rio T."/>
            <person name="Dalin E."/>
            <person name="Tice H."/>
            <person name="Pitluck S."/>
            <person name="Bruce D."/>
            <person name="Goodwin L."/>
            <person name="Thompson L.S."/>
            <person name="Brettin T."/>
            <person name="Detter J.C."/>
            <person name="Han C."/>
            <person name="Schmutz J."/>
            <person name="Larimer F."/>
            <person name="Land M."/>
            <person name="Hauser L."/>
            <person name="Kyrpides N."/>
            <person name="Kim E."/>
            <person name="Stephens C."/>
            <person name="Richardson P."/>
        </authorList>
    </citation>
    <scope>NUCLEOTIDE SEQUENCE [LARGE SCALE GENOMIC DNA]</scope>
    <source>
        <strain>K31</strain>
    </source>
</reference>
<dbReference type="EC" id="6.3.2.8" evidence="1"/>
<dbReference type="EMBL" id="CP000927">
    <property type="protein sequence ID" value="ABZ72790.1"/>
    <property type="molecule type" value="Genomic_DNA"/>
</dbReference>
<dbReference type="SMR" id="B0T827"/>
<dbReference type="STRING" id="366602.Caul_3663"/>
<dbReference type="KEGG" id="cak:Caul_3663"/>
<dbReference type="eggNOG" id="COG0773">
    <property type="taxonomic scope" value="Bacteria"/>
</dbReference>
<dbReference type="HOGENOM" id="CLU_028104_2_2_5"/>
<dbReference type="OrthoDB" id="9804126at2"/>
<dbReference type="UniPathway" id="UPA00219"/>
<dbReference type="GO" id="GO:0005737">
    <property type="term" value="C:cytoplasm"/>
    <property type="evidence" value="ECO:0007669"/>
    <property type="project" value="UniProtKB-SubCell"/>
</dbReference>
<dbReference type="GO" id="GO:0005524">
    <property type="term" value="F:ATP binding"/>
    <property type="evidence" value="ECO:0007669"/>
    <property type="project" value="UniProtKB-UniRule"/>
</dbReference>
<dbReference type="GO" id="GO:0008763">
    <property type="term" value="F:UDP-N-acetylmuramate-L-alanine ligase activity"/>
    <property type="evidence" value="ECO:0007669"/>
    <property type="project" value="UniProtKB-UniRule"/>
</dbReference>
<dbReference type="GO" id="GO:0051301">
    <property type="term" value="P:cell division"/>
    <property type="evidence" value="ECO:0007669"/>
    <property type="project" value="UniProtKB-KW"/>
</dbReference>
<dbReference type="GO" id="GO:0071555">
    <property type="term" value="P:cell wall organization"/>
    <property type="evidence" value="ECO:0007669"/>
    <property type="project" value="UniProtKB-KW"/>
</dbReference>
<dbReference type="GO" id="GO:0009252">
    <property type="term" value="P:peptidoglycan biosynthetic process"/>
    <property type="evidence" value="ECO:0007669"/>
    <property type="project" value="UniProtKB-UniRule"/>
</dbReference>
<dbReference type="GO" id="GO:0008360">
    <property type="term" value="P:regulation of cell shape"/>
    <property type="evidence" value="ECO:0007669"/>
    <property type="project" value="UniProtKB-KW"/>
</dbReference>
<dbReference type="Gene3D" id="3.90.190.20">
    <property type="entry name" value="Mur ligase, C-terminal domain"/>
    <property type="match status" value="1"/>
</dbReference>
<dbReference type="Gene3D" id="3.40.1190.10">
    <property type="entry name" value="Mur-like, catalytic domain"/>
    <property type="match status" value="1"/>
</dbReference>
<dbReference type="Gene3D" id="3.40.50.720">
    <property type="entry name" value="NAD(P)-binding Rossmann-like Domain"/>
    <property type="match status" value="1"/>
</dbReference>
<dbReference type="HAMAP" id="MF_00046">
    <property type="entry name" value="MurC"/>
    <property type="match status" value="1"/>
</dbReference>
<dbReference type="InterPro" id="IPR036565">
    <property type="entry name" value="Mur-like_cat_sf"/>
</dbReference>
<dbReference type="InterPro" id="IPR004101">
    <property type="entry name" value="Mur_ligase_C"/>
</dbReference>
<dbReference type="InterPro" id="IPR036615">
    <property type="entry name" value="Mur_ligase_C_dom_sf"/>
</dbReference>
<dbReference type="InterPro" id="IPR013221">
    <property type="entry name" value="Mur_ligase_cen"/>
</dbReference>
<dbReference type="InterPro" id="IPR000713">
    <property type="entry name" value="Mur_ligase_N"/>
</dbReference>
<dbReference type="InterPro" id="IPR050061">
    <property type="entry name" value="MurCDEF_pg_biosynth"/>
</dbReference>
<dbReference type="InterPro" id="IPR005758">
    <property type="entry name" value="UDP-N-AcMur_Ala_ligase_MurC"/>
</dbReference>
<dbReference type="NCBIfam" id="TIGR01082">
    <property type="entry name" value="murC"/>
    <property type="match status" value="1"/>
</dbReference>
<dbReference type="PANTHER" id="PTHR43445:SF3">
    <property type="entry name" value="UDP-N-ACETYLMURAMATE--L-ALANINE LIGASE"/>
    <property type="match status" value="1"/>
</dbReference>
<dbReference type="PANTHER" id="PTHR43445">
    <property type="entry name" value="UDP-N-ACETYLMURAMATE--L-ALANINE LIGASE-RELATED"/>
    <property type="match status" value="1"/>
</dbReference>
<dbReference type="Pfam" id="PF01225">
    <property type="entry name" value="Mur_ligase"/>
    <property type="match status" value="1"/>
</dbReference>
<dbReference type="Pfam" id="PF02875">
    <property type="entry name" value="Mur_ligase_C"/>
    <property type="match status" value="1"/>
</dbReference>
<dbReference type="Pfam" id="PF08245">
    <property type="entry name" value="Mur_ligase_M"/>
    <property type="match status" value="1"/>
</dbReference>
<dbReference type="SUPFAM" id="SSF51984">
    <property type="entry name" value="MurCD N-terminal domain"/>
    <property type="match status" value="1"/>
</dbReference>
<dbReference type="SUPFAM" id="SSF53623">
    <property type="entry name" value="MurD-like peptide ligases, catalytic domain"/>
    <property type="match status" value="1"/>
</dbReference>
<dbReference type="SUPFAM" id="SSF53244">
    <property type="entry name" value="MurD-like peptide ligases, peptide-binding domain"/>
    <property type="match status" value="1"/>
</dbReference>